<gene>
    <name type="primary">IL2</name>
</gene>
<reference key="1">
    <citation type="journal article" date="2005" name="Cytokine">
        <title>Expression of nine-banded armadillo (Dasypus novemcinctus) interleukin-2 in E. coli.</title>
        <authorList>
            <person name="Adams J.E."/>
            <person name="Pena M.T."/>
            <person name="Gillis T.P."/>
            <person name="Williams D.L."/>
            <person name="Adams L.B."/>
            <person name="Truman R.W."/>
        </authorList>
    </citation>
    <scope>NUCLEOTIDE SEQUENCE [MRNA]</scope>
</reference>
<accession>Q1WM29</accession>
<dbReference type="EMBL" id="DQ092925">
    <property type="protein sequence ID" value="AAY82084.1"/>
    <property type="molecule type" value="mRNA"/>
</dbReference>
<dbReference type="RefSeq" id="NP_001268243.1">
    <property type="nucleotide sequence ID" value="NM_001281314.1"/>
</dbReference>
<dbReference type="SMR" id="Q1WM29"/>
<dbReference type="GlyCosmos" id="Q1WM29">
    <property type="glycosylation" value="1 site, No reported glycans"/>
</dbReference>
<dbReference type="GeneID" id="101413757"/>
<dbReference type="KEGG" id="dnm:101413757"/>
<dbReference type="CTD" id="3558"/>
<dbReference type="HOGENOM" id="CLU_124210_0_0_1"/>
<dbReference type="OrthoDB" id="9450228at2759"/>
<dbReference type="TreeFam" id="TF338200"/>
<dbReference type="GO" id="GO:0005615">
    <property type="term" value="C:extracellular space"/>
    <property type="evidence" value="ECO:0007669"/>
    <property type="project" value="UniProtKB-KW"/>
</dbReference>
<dbReference type="GO" id="GO:0005125">
    <property type="term" value="F:cytokine activity"/>
    <property type="evidence" value="ECO:0007669"/>
    <property type="project" value="UniProtKB-KW"/>
</dbReference>
<dbReference type="GO" id="GO:0008083">
    <property type="term" value="F:growth factor activity"/>
    <property type="evidence" value="ECO:0007669"/>
    <property type="project" value="UniProtKB-KW"/>
</dbReference>
<dbReference type="GO" id="GO:0005134">
    <property type="term" value="F:interleukin-2 receptor binding"/>
    <property type="evidence" value="ECO:0007669"/>
    <property type="project" value="InterPro"/>
</dbReference>
<dbReference type="GO" id="GO:0002250">
    <property type="term" value="P:adaptive immune response"/>
    <property type="evidence" value="ECO:0007669"/>
    <property type="project" value="UniProtKB-KW"/>
</dbReference>
<dbReference type="Gene3D" id="1.20.1250.10">
    <property type="match status" value="1"/>
</dbReference>
<dbReference type="InterPro" id="IPR009079">
    <property type="entry name" value="4_helix_cytokine-like_core"/>
</dbReference>
<dbReference type="InterPro" id="IPR000779">
    <property type="entry name" value="IL-2"/>
</dbReference>
<dbReference type="InterPro" id="IPR030477">
    <property type="entry name" value="IL-2_CS"/>
</dbReference>
<dbReference type="PANTHER" id="PTHR48487">
    <property type="entry name" value="INTERLEUKIN-2"/>
    <property type="match status" value="1"/>
</dbReference>
<dbReference type="PANTHER" id="PTHR48487:SF1">
    <property type="entry name" value="INTERLEUKIN-2"/>
    <property type="match status" value="1"/>
</dbReference>
<dbReference type="Pfam" id="PF00715">
    <property type="entry name" value="IL2"/>
    <property type="match status" value="1"/>
</dbReference>
<dbReference type="PRINTS" id="PR00265">
    <property type="entry name" value="INTERLEUKIN2"/>
</dbReference>
<dbReference type="SMART" id="SM00189">
    <property type="entry name" value="IL2"/>
    <property type="match status" value="1"/>
</dbReference>
<dbReference type="SUPFAM" id="SSF47266">
    <property type="entry name" value="4-helical cytokines"/>
    <property type="match status" value="1"/>
</dbReference>
<dbReference type="PROSITE" id="PS00424">
    <property type="entry name" value="INTERLEUKIN_2"/>
    <property type="match status" value="1"/>
</dbReference>
<organism>
    <name type="scientific">Dasypus novemcinctus</name>
    <name type="common">Nine-banded armadillo</name>
    <dbReference type="NCBI Taxonomy" id="9361"/>
    <lineage>
        <taxon>Eukaryota</taxon>
        <taxon>Metazoa</taxon>
        <taxon>Chordata</taxon>
        <taxon>Craniata</taxon>
        <taxon>Vertebrata</taxon>
        <taxon>Euteleostomi</taxon>
        <taxon>Mammalia</taxon>
        <taxon>Eutheria</taxon>
        <taxon>Xenarthra</taxon>
        <taxon>Cingulata</taxon>
        <taxon>Dasypodidae</taxon>
        <taxon>Dasypus</taxon>
    </lineage>
</organism>
<proteinExistence type="evidence at transcript level"/>
<protein>
    <recommendedName>
        <fullName>Interleukin-2</fullName>
        <shortName>IL-2</shortName>
    </recommendedName>
    <alternativeName>
        <fullName>T-cell growth factor</fullName>
        <shortName>TCGF</shortName>
    </alternativeName>
</protein>
<sequence>MYKMQLVACIALSLVLITNSAPTSSSTKETQQQLEQLLLDLKMLSKMVNNKDLKLPRMLTFKFYMPKRVTELKHLQCLVEELKPLENVLNLAQSQMSQLEHNGDLISNINITVLELKGSETTFMCDYDDEAATIVEFLNKWIIFCQSIISKRLDN</sequence>
<name>IL2_DASNO</name>
<comment type="function">
    <text evidence="2">Cytokine produced by activated CD4-positive helper T-cells and to a lesser extend activated CD8-positive T-cells and natural killer (NK) cells that plays pivotal roles in the immune response and tolerance. Binds to a receptor complex composed of either the high-affinity trimeric IL-2R (IL2RA/CD25, IL2RB/CD122 and IL2RG/CD132) or the low-affinity dimeric IL-2R (IL2RB and IL2RG). Interaction with the receptor leads to oligomerization and conformation changes in the IL-2R subunits resulting in downstream signaling starting with phosphorylation of JAK1 and JAK3. In turn, JAK1 and JAK3 phosphorylate the receptor to form a docking site leading to the phosphorylation of several substrates including STAT5. This process leads to activation of several pathways including STAT, phosphoinositide-3-kinase/PI3K and mitogen-activated protein kinase/MAPK pathways. Functions as a T-cell growth factor and can increase NK-cell cytolytic activity as well. Promotes strong proliferation of activated B-cells and subsequently immunoglobulin production. Plays a pivotal role in regulating the adaptive immune system by controlling the survival and proliferation of regulatory T-cells, which are required for the maintenance of immune tolerance. Moreover, participates in the differentiation and homeostasis of effector T-cell subsets, including Th1, Th2, Th17 as well as memory CD8-positive T-cells.</text>
</comment>
<comment type="subcellular location">
    <subcellularLocation>
        <location evidence="1">Secreted</location>
    </subcellularLocation>
</comment>
<comment type="similarity">
    <text evidence="3">Belongs to the IL-2 family.</text>
</comment>
<keyword id="KW-1064">Adaptive immunity</keyword>
<keyword id="KW-0202">Cytokine</keyword>
<keyword id="KW-1015">Disulfide bond</keyword>
<keyword id="KW-0325">Glycoprotein</keyword>
<keyword id="KW-0339">Growth factor</keyword>
<keyword id="KW-0391">Immunity</keyword>
<keyword id="KW-0964">Secreted</keyword>
<keyword id="KW-0732">Signal</keyword>
<evidence type="ECO:0000250" key="1"/>
<evidence type="ECO:0000250" key="2">
    <source>
        <dbReference type="UniProtKB" id="P60568"/>
    </source>
</evidence>
<evidence type="ECO:0000305" key="3"/>
<feature type="signal peptide" evidence="1">
    <location>
        <begin position="1"/>
        <end position="20"/>
    </location>
</feature>
<feature type="chain" id="PRO_0000253752" description="Interleukin-2">
    <location>
        <begin position="21"/>
        <end position="155"/>
    </location>
</feature>
<feature type="glycosylation site" description="O-linked (GalNAc...) threonine" evidence="1">
    <location>
        <position position="23"/>
    </location>
</feature>
<feature type="disulfide bond" evidence="1">
    <location>
        <begin position="77"/>
        <end position="125"/>
    </location>
</feature>